<gene>
    <name evidence="1" type="primary">dsdA</name>
    <name type="ordered locus">CKO_00021</name>
</gene>
<evidence type="ECO:0000255" key="1">
    <source>
        <dbReference type="HAMAP-Rule" id="MF_01030"/>
    </source>
</evidence>
<protein>
    <recommendedName>
        <fullName evidence="1">D-serine dehydratase</fullName>
        <ecNumber evidence="1">4.3.1.18</ecNumber>
    </recommendedName>
    <alternativeName>
        <fullName evidence="1">D-serine deaminase</fullName>
        <shortName evidence="1">DSD</shortName>
    </alternativeName>
</protein>
<reference key="1">
    <citation type="submission" date="2007-08" db="EMBL/GenBank/DDBJ databases">
        <authorList>
            <consortium name="The Citrobacter koseri Genome Sequencing Project"/>
            <person name="McClelland M."/>
            <person name="Sanderson E.K."/>
            <person name="Porwollik S."/>
            <person name="Spieth J."/>
            <person name="Clifton W.S."/>
            <person name="Latreille P."/>
            <person name="Courtney L."/>
            <person name="Wang C."/>
            <person name="Pepin K."/>
            <person name="Bhonagiri V."/>
            <person name="Nash W."/>
            <person name="Johnson M."/>
            <person name="Thiruvilangam P."/>
            <person name="Wilson R."/>
        </authorList>
    </citation>
    <scope>NUCLEOTIDE SEQUENCE [LARGE SCALE GENOMIC DNA]</scope>
    <source>
        <strain>ATCC BAA-895 / CDC 4225-83 / SGSC4696</strain>
    </source>
</reference>
<comment type="catalytic activity">
    <reaction evidence="1">
        <text>D-serine = pyruvate + NH4(+)</text>
        <dbReference type="Rhea" id="RHEA:13977"/>
        <dbReference type="ChEBI" id="CHEBI:15361"/>
        <dbReference type="ChEBI" id="CHEBI:28938"/>
        <dbReference type="ChEBI" id="CHEBI:35247"/>
        <dbReference type="EC" id="4.3.1.18"/>
    </reaction>
</comment>
<comment type="cofactor">
    <cofactor evidence="1">
        <name>pyridoxal 5'-phosphate</name>
        <dbReference type="ChEBI" id="CHEBI:597326"/>
    </cofactor>
</comment>
<comment type="subunit">
    <text evidence="1">Monomer.</text>
</comment>
<comment type="similarity">
    <text evidence="1">Belongs to the serine/threonine dehydratase family. DsdA subfamily.</text>
</comment>
<feature type="chain" id="PRO_1000063710" description="D-serine dehydratase">
    <location>
        <begin position="1"/>
        <end position="442"/>
    </location>
</feature>
<feature type="modified residue" description="N6-(pyridoxal phosphate)lysine" evidence="1">
    <location>
        <position position="118"/>
    </location>
</feature>
<organism>
    <name type="scientific">Citrobacter koseri (strain ATCC BAA-895 / CDC 4225-83 / SGSC4696)</name>
    <dbReference type="NCBI Taxonomy" id="290338"/>
    <lineage>
        <taxon>Bacteria</taxon>
        <taxon>Pseudomonadati</taxon>
        <taxon>Pseudomonadota</taxon>
        <taxon>Gammaproteobacteria</taxon>
        <taxon>Enterobacterales</taxon>
        <taxon>Enterobacteriaceae</taxon>
        <taxon>Citrobacter</taxon>
    </lineage>
</organism>
<accession>A8ACI7</accession>
<proteinExistence type="inferred from homology"/>
<dbReference type="EC" id="4.3.1.18" evidence="1"/>
<dbReference type="EMBL" id="CP000822">
    <property type="protein sequence ID" value="ABV11200.1"/>
    <property type="molecule type" value="Genomic_DNA"/>
</dbReference>
<dbReference type="RefSeq" id="WP_012000781.1">
    <property type="nucleotide sequence ID" value="NC_009792.1"/>
</dbReference>
<dbReference type="SMR" id="A8ACI7"/>
<dbReference type="STRING" id="290338.CKO_00021"/>
<dbReference type="GeneID" id="45134330"/>
<dbReference type="KEGG" id="cko:CKO_00021"/>
<dbReference type="HOGENOM" id="CLU_035707_0_0_6"/>
<dbReference type="OrthoDB" id="9780546at2"/>
<dbReference type="Proteomes" id="UP000008148">
    <property type="component" value="Chromosome"/>
</dbReference>
<dbReference type="GO" id="GO:0008721">
    <property type="term" value="F:D-serine ammonia-lyase activity"/>
    <property type="evidence" value="ECO:0007669"/>
    <property type="project" value="UniProtKB-EC"/>
</dbReference>
<dbReference type="GO" id="GO:0016836">
    <property type="term" value="F:hydro-lyase activity"/>
    <property type="evidence" value="ECO:0007669"/>
    <property type="project" value="UniProtKB-UniRule"/>
</dbReference>
<dbReference type="GO" id="GO:0030170">
    <property type="term" value="F:pyridoxal phosphate binding"/>
    <property type="evidence" value="ECO:0007669"/>
    <property type="project" value="InterPro"/>
</dbReference>
<dbReference type="GO" id="GO:0036088">
    <property type="term" value="P:D-serine catabolic process"/>
    <property type="evidence" value="ECO:0007669"/>
    <property type="project" value="TreeGrafter"/>
</dbReference>
<dbReference type="GO" id="GO:0009097">
    <property type="term" value="P:isoleucine biosynthetic process"/>
    <property type="evidence" value="ECO:0007669"/>
    <property type="project" value="TreeGrafter"/>
</dbReference>
<dbReference type="CDD" id="cd06447">
    <property type="entry name" value="D-Ser-dehyd"/>
    <property type="match status" value="1"/>
</dbReference>
<dbReference type="FunFam" id="3.40.50.1100:FF:000018">
    <property type="entry name" value="D-serine dehydratase"/>
    <property type="match status" value="1"/>
</dbReference>
<dbReference type="Gene3D" id="3.40.50.1100">
    <property type="match status" value="2"/>
</dbReference>
<dbReference type="HAMAP" id="MF_01030">
    <property type="entry name" value="D_Ser_dehydrat"/>
    <property type="match status" value="1"/>
</dbReference>
<dbReference type="InterPro" id="IPR011780">
    <property type="entry name" value="D_Ser_am_lyase"/>
</dbReference>
<dbReference type="InterPro" id="IPR050147">
    <property type="entry name" value="Ser/Thr_Dehydratase"/>
</dbReference>
<dbReference type="InterPro" id="IPR000634">
    <property type="entry name" value="Ser/Thr_deHydtase_PyrdxlP-BS"/>
</dbReference>
<dbReference type="InterPro" id="IPR001926">
    <property type="entry name" value="TrpB-like_PALP"/>
</dbReference>
<dbReference type="InterPro" id="IPR036052">
    <property type="entry name" value="TrpB-like_PALP_sf"/>
</dbReference>
<dbReference type="NCBIfam" id="TIGR02035">
    <property type="entry name" value="D_Ser_am_lyase"/>
    <property type="match status" value="1"/>
</dbReference>
<dbReference type="NCBIfam" id="NF002823">
    <property type="entry name" value="PRK02991.1"/>
    <property type="match status" value="1"/>
</dbReference>
<dbReference type="PANTHER" id="PTHR48078:SF9">
    <property type="entry name" value="D-SERINE DEHYDRATASE"/>
    <property type="match status" value="1"/>
</dbReference>
<dbReference type="PANTHER" id="PTHR48078">
    <property type="entry name" value="THREONINE DEHYDRATASE, MITOCHONDRIAL-RELATED"/>
    <property type="match status" value="1"/>
</dbReference>
<dbReference type="Pfam" id="PF00291">
    <property type="entry name" value="PALP"/>
    <property type="match status" value="1"/>
</dbReference>
<dbReference type="SUPFAM" id="SSF53686">
    <property type="entry name" value="Tryptophan synthase beta subunit-like PLP-dependent enzymes"/>
    <property type="match status" value="1"/>
</dbReference>
<dbReference type="PROSITE" id="PS00165">
    <property type="entry name" value="DEHYDRATASE_SER_THR"/>
    <property type="match status" value="1"/>
</dbReference>
<keyword id="KW-0456">Lyase</keyword>
<keyword id="KW-0663">Pyridoxal phosphate</keyword>
<keyword id="KW-1185">Reference proteome</keyword>
<sequence length="442" mass="47767">MENAKMTSLIAQYPLVEDLIALKETTWFNPGTTSLAEGLPYVGLTAQDVQDAHARLARFAPYLAKAFPETAATGGIIESELAIIPAMQQRLEKEYGQKISGELLLKKDSHLPISGSIKARGGIYEVLAHAEKLALEAGLLTTEDDYSVMLSPEFRQFFSQYSIAVGSTGNLGLSIGIMSACIGFKVTVHMSADARAWKKAKLRSHGVTVVEYEEDYGVAVEQGRKAAQSDPNCFFIDDENSRTLFLGYAVAGQRLKAQFAQQGRVVDADHPLFVYLPCGVGGGPGGVAFGLKLAFGDNVHCFFAEPTHSPCMLLGVYTGLHDAISVQEIGVDNLTAADGLAVGRASGFVGRAMERLLDGLYTLDDRTMYDMLGWLAQEEGIRLEPSALAGMAGPQRVCRSTDYQQMHAFSAEQLNHATHLVWATGGGMVPEEEMAQYLAKGR</sequence>
<name>SDHD_CITK8</name>